<keyword id="KW-0131">Cell cycle</keyword>
<keyword id="KW-0132">Cell division</keyword>
<keyword id="KW-0963">Cytoplasm</keyword>
<keyword id="KW-0206">Cytoskeleton</keyword>
<keyword id="KW-0498">Mitosis</keyword>
<keyword id="KW-0539">Nucleus</keyword>
<keyword id="KW-0597">Phosphoprotein</keyword>
<keyword id="KW-1185">Reference proteome</keyword>
<keyword id="KW-0677">Repeat</keyword>
<keyword id="KW-0802">TPR repeat</keyword>
<keyword id="KW-0833">Ubl conjugation pathway</keyword>
<accession>Q5ZKK3</accession>
<organism>
    <name type="scientific">Gallus gallus</name>
    <name type="common">Chicken</name>
    <dbReference type="NCBI Taxonomy" id="9031"/>
    <lineage>
        <taxon>Eukaryota</taxon>
        <taxon>Metazoa</taxon>
        <taxon>Chordata</taxon>
        <taxon>Craniata</taxon>
        <taxon>Vertebrata</taxon>
        <taxon>Euteleostomi</taxon>
        <taxon>Archelosauria</taxon>
        <taxon>Archosauria</taxon>
        <taxon>Dinosauria</taxon>
        <taxon>Saurischia</taxon>
        <taxon>Theropoda</taxon>
        <taxon>Coelurosauria</taxon>
        <taxon>Aves</taxon>
        <taxon>Neognathae</taxon>
        <taxon>Galloanserae</taxon>
        <taxon>Galliformes</taxon>
        <taxon>Phasianidae</taxon>
        <taxon>Phasianinae</taxon>
        <taxon>Gallus</taxon>
    </lineage>
</organism>
<dbReference type="EMBL" id="AJ720081">
    <property type="protein sequence ID" value="CAG31740.1"/>
    <property type="molecule type" value="mRNA"/>
</dbReference>
<dbReference type="RefSeq" id="NP_001006187.1">
    <property type="nucleotide sequence ID" value="NM_001006187.1"/>
</dbReference>
<dbReference type="SMR" id="Q5ZKK3"/>
<dbReference type="FunCoup" id="Q5ZKK3">
    <property type="interactions" value="1648"/>
</dbReference>
<dbReference type="STRING" id="9031.ENSGALP00000038461"/>
<dbReference type="PaxDb" id="9031-ENSGALP00000038461"/>
<dbReference type="GeneID" id="416842"/>
<dbReference type="KEGG" id="gga:416842"/>
<dbReference type="CTD" id="51433"/>
<dbReference type="VEuPathDB" id="HostDB:geneid_416842"/>
<dbReference type="eggNOG" id="KOG4322">
    <property type="taxonomic scope" value="Eukaryota"/>
</dbReference>
<dbReference type="InParanoid" id="Q5ZKK3"/>
<dbReference type="OMA" id="DANMGMA"/>
<dbReference type="OrthoDB" id="2504561at2759"/>
<dbReference type="PhylomeDB" id="Q5ZKK3"/>
<dbReference type="UniPathway" id="UPA00143"/>
<dbReference type="PRO" id="PR:Q5ZKK3"/>
<dbReference type="Proteomes" id="UP000000539">
    <property type="component" value="Unassembled WGS sequence"/>
</dbReference>
<dbReference type="GO" id="GO:0005680">
    <property type="term" value="C:anaphase-promoting complex"/>
    <property type="evidence" value="ECO:0000250"/>
    <property type="project" value="UniProtKB"/>
</dbReference>
<dbReference type="GO" id="GO:0005737">
    <property type="term" value="C:cytoplasm"/>
    <property type="evidence" value="ECO:0007669"/>
    <property type="project" value="UniProtKB-KW"/>
</dbReference>
<dbReference type="GO" id="GO:0005634">
    <property type="term" value="C:nucleus"/>
    <property type="evidence" value="ECO:0000250"/>
    <property type="project" value="UniProtKB"/>
</dbReference>
<dbReference type="GO" id="GO:0005819">
    <property type="term" value="C:spindle"/>
    <property type="evidence" value="ECO:0000250"/>
    <property type="project" value="UniProtKB"/>
</dbReference>
<dbReference type="GO" id="GO:0031145">
    <property type="term" value="P:anaphase-promoting complex-dependent catabolic process"/>
    <property type="evidence" value="ECO:0000250"/>
    <property type="project" value="UniProtKB"/>
</dbReference>
<dbReference type="GO" id="GO:0051301">
    <property type="term" value="P:cell division"/>
    <property type="evidence" value="ECO:0007669"/>
    <property type="project" value="UniProtKB-KW"/>
</dbReference>
<dbReference type="GO" id="GO:0045842">
    <property type="term" value="P:positive regulation of mitotic metaphase/anaphase transition"/>
    <property type="evidence" value="ECO:0000318"/>
    <property type="project" value="GO_Central"/>
</dbReference>
<dbReference type="GO" id="GO:0141198">
    <property type="term" value="P:protein branched polyubiquitination"/>
    <property type="evidence" value="ECO:0000250"/>
    <property type="project" value="UniProtKB"/>
</dbReference>
<dbReference type="GO" id="GO:0070979">
    <property type="term" value="P:protein K11-linked ubiquitination"/>
    <property type="evidence" value="ECO:0000250"/>
    <property type="project" value="UniProtKB"/>
</dbReference>
<dbReference type="GO" id="GO:0070936">
    <property type="term" value="P:protein K48-linked ubiquitination"/>
    <property type="evidence" value="ECO:0000250"/>
    <property type="project" value="UniProtKB"/>
</dbReference>
<dbReference type="CDD" id="cd16270">
    <property type="entry name" value="Apc5_N"/>
    <property type="match status" value="1"/>
</dbReference>
<dbReference type="FunFam" id="1.25.40.10:FF:000127">
    <property type="entry name" value="anaphase-promoting complex subunit 5 isoform X1"/>
    <property type="match status" value="1"/>
</dbReference>
<dbReference type="Gene3D" id="1.25.40.10">
    <property type="entry name" value="Tetratricopeptide repeat domain"/>
    <property type="match status" value="1"/>
</dbReference>
<dbReference type="InterPro" id="IPR037679">
    <property type="entry name" value="Apc5"/>
</dbReference>
<dbReference type="InterPro" id="IPR026000">
    <property type="entry name" value="Apc5_dom"/>
</dbReference>
<dbReference type="InterPro" id="IPR048968">
    <property type="entry name" value="Apc5_N"/>
</dbReference>
<dbReference type="InterPro" id="IPR011990">
    <property type="entry name" value="TPR-like_helical_dom_sf"/>
</dbReference>
<dbReference type="PANTHER" id="PTHR12830">
    <property type="entry name" value="ANAPHASE-PROMOTING COMPLEX SUBUNIT 5"/>
    <property type="match status" value="1"/>
</dbReference>
<dbReference type="PANTHER" id="PTHR12830:SF9">
    <property type="entry name" value="ANAPHASE-PROMOTING COMPLEX SUBUNIT 5"/>
    <property type="match status" value="1"/>
</dbReference>
<dbReference type="Pfam" id="PF12862">
    <property type="entry name" value="ANAPC5"/>
    <property type="match status" value="1"/>
</dbReference>
<dbReference type="Pfam" id="PF21371">
    <property type="entry name" value="Apc5_N"/>
    <property type="match status" value="1"/>
</dbReference>
<dbReference type="SUPFAM" id="SSF48452">
    <property type="entry name" value="TPR-like"/>
    <property type="match status" value="2"/>
</dbReference>
<name>APC5_CHICK</name>
<feature type="chain" id="PRO_0000307378" description="Anaphase-promoting complex subunit 5">
    <location>
        <begin position="1"/>
        <end position="756"/>
    </location>
</feature>
<feature type="repeat" description="TPR 1">
    <location>
        <begin position="301"/>
        <end position="334"/>
    </location>
</feature>
<feature type="repeat" description="TPR 2">
    <location>
        <begin position="522"/>
        <end position="555"/>
    </location>
</feature>
<feature type="repeat" description="TPR 3">
    <location>
        <begin position="581"/>
        <end position="614"/>
    </location>
</feature>
<feature type="repeat" description="TPR 4">
    <location>
        <begin position="678"/>
        <end position="711"/>
    </location>
</feature>
<comment type="function">
    <text evidence="1">Component of the anaphase promoting complex/cyclosome (APC/C), a cell cycle-regulated E3 ubiquitin ligase that controls progression through mitosis and the G1 phase of the cell cycle. The APC/C complex acts by mediating ubiquitination and subsequent degradation of target proteins: it mainly mediates the formation of 'Lys-11'-linked polyubiquitin chains and, to a lower extent, the formation of 'Lys-48'- and 'Lys-63'-linked polyubiquitin chains. The APC/C complex catalyzes assembly of branched 'Lys-11'-/'Lys-48'-linked branched ubiquitin chains on target proteins.</text>
</comment>
<comment type="pathway">
    <text evidence="1">Protein modification; protein ubiquitination.</text>
</comment>
<comment type="subunit">
    <text evidence="1">The APC/C is composed of at least 12 subunits.</text>
</comment>
<comment type="subcellular location">
    <subcellularLocation>
        <location evidence="1">Nucleus</location>
    </subcellularLocation>
    <subcellularLocation>
        <location evidence="1">Cytoplasm</location>
        <location evidence="1">Cytoskeleton</location>
        <location evidence="1">Spindle</location>
    </subcellularLocation>
</comment>
<comment type="similarity">
    <text evidence="2">Belongs to the APC5 family.</text>
</comment>
<proteinExistence type="evidence at transcript level"/>
<evidence type="ECO:0000250" key="1">
    <source>
        <dbReference type="UniProtKB" id="Q9UJX4"/>
    </source>
</evidence>
<evidence type="ECO:0000305" key="2"/>
<sequence length="756" mass="85306">MASVHESLYFNPMMTNGVVHANVFGIKDWVTPYKMALLVLLSELGRAGSQLDQLERRRLNRLLLPLLQGPDMPLSRLRKAIEECCPNLAGSVHIRLKLIAEGELKDMEQFFDDLSDSFSGTEPEVHKTSVIGLFLRHMILAYNKLSFSQVYKLYTALQQYFLNDEKKCGIDENDMELTNTEELDGKMEKEELDVPLREEEISCSGPLSQKQAEYFLSQQASLLKNDETKALSPVSLQKELNNLLKFNPDFAEAHYLSYLNSLRVHDVFSSTHSLLHYFDRLILTGAESKSNGDEGYGRSLRYAALNLAALHCRFGHYQQAELALQEAIRIAQESNDHVCLQHCLSWLHISEQKIFDSCVLLEHSVNKSLHFGLPYLASLGIQSLVQQRAFAGKAANKLMDALKDSDLLHWKHSLSELIDISIAQKTAIWRLYGRSTMALQQAQTLLSMNSLEAVNVGVQQNNTEAFAVVLCHLAELHAEQGYFAAASEILKHLKERFPPNSQHAQLWMLFDQKIQFERAMNDGRYHIADSLVAGITALNSIEGMYRKAIVLKAQNQMLEAHKLLQKLLIHCQEIKNTEIVISVLLSVAELYWRSSCHTIALPVLLQALAFSREYSLQYLASETVLNLAFSQLILGVPEQVLNILHMAIEPGLAHGAVLDKGCAMFLVAKCQVASTASYSQQKKAEALESAILNLNEAKTYLAKVDCKEQLRDVLYFQARLFHTLGKTQERNKCAMLFRQLHQELPAHGVPLINAFK</sequence>
<gene>
    <name type="primary">ANAPC5</name>
    <name type="ORF">RCJMB04_10e17</name>
</gene>
<reference key="1">
    <citation type="journal article" date="2005" name="Genome Biol.">
        <title>Full-length cDNAs from chicken bursal lymphocytes to facilitate gene function analysis.</title>
        <authorList>
            <person name="Caldwell R.B."/>
            <person name="Kierzek A.M."/>
            <person name="Arakawa H."/>
            <person name="Bezzubov Y."/>
            <person name="Zaim J."/>
            <person name="Fiedler P."/>
            <person name="Kutter S."/>
            <person name="Blagodatski A."/>
            <person name="Kostovska D."/>
            <person name="Koter M."/>
            <person name="Plachy J."/>
            <person name="Carninci P."/>
            <person name="Hayashizaki Y."/>
            <person name="Buerstedde J.-M."/>
        </authorList>
    </citation>
    <scope>NUCLEOTIDE SEQUENCE [LARGE SCALE MRNA]</scope>
    <source>
        <strain>CB</strain>
        <tissue>Bursa of Fabricius</tissue>
    </source>
</reference>
<protein>
    <recommendedName>
        <fullName>Anaphase-promoting complex subunit 5</fullName>
        <shortName>APC5</shortName>
    </recommendedName>
    <alternativeName>
        <fullName>Cyclosome subunit 5</fullName>
    </alternativeName>
</protein>